<name>TCTP_GRARO</name>
<dbReference type="EMBL" id="AB201040">
    <property type="protein sequence ID" value="BAN13536.1"/>
    <property type="molecule type" value="mRNA"/>
</dbReference>
<dbReference type="SMR" id="M5B4R7"/>
<dbReference type="ArachnoServer" id="AS001840">
    <property type="toxin name" value="TCTP1-1-Grammostola rosea"/>
</dbReference>
<dbReference type="GO" id="GO:0005737">
    <property type="term" value="C:cytoplasm"/>
    <property type="evidence" value="ECO:0007669"/>
    <property type="project" value="TreeGrafter"/>
</dbReference>
<dbReference type="GO" id="GO:0005576">
    <property type="term" value="C:extracellular region"/>
    <property type="evidence" value="ECO:0007669"/>
    <property type="project" value="UniProtKB-SubCell"/>
</dbReference>
<dbReference type="GO" id="GO:0005509">
    <property type="term" value="F:calcium ion binding"/>
    <property type="evidence" value="ECO:0007669"/>
    <property type="project" value="TreeGrafter"/>
</dbReference>
<dbReference type="FunFam" id="2.170.150.10:FF:000002">
    <property type="entry name" value="Translationally-controlled tumor protein homolog"/>
    <property type="match status" value="1"/>
</dbReference>
<dbReference type="Gene3D" id="2.170.150.10">
    <property type="entry name" value="Metal Binding Protein, Guanine Nucleotide Exchange Factor, Chain A"/>
    <property type="match status" value="1"/>
</dbReference>
<dbReference type="InterPro" id="IPR011057">
    <property type="entry name" value="Mss4-like_sf"/>
</dbReference>
<dbReference type="InterPro" id="IPR011323">
    <property type="entry name" value="Mss4/transl-control_tumour"/>
</dbReference>
<dbReference type="InterPro" id="IPR034737">
    <property type="entry name" value="TCTP"/>
</dbReference>
<dbReference type="InterPro" id="IPR018103">
    <property type="entry name" value="Translation_control_tumour_CS"/>
</dbReference>
<dbReference type="InterPro" id="IPR018105">
    <property type="entry name" value="Translational_control_tumour_p"/>
</dbReference>
<dbReference type="PANTHER" id="PTHR11991">
    <property type="entry name" value="TRANSLATIONALLY CONTROLLED TUMOR PROTEIN-RELATED"/>
    <property type="match status" value="1"/>
</dbReference>
<dbReference type="PANTHER" id="PTHR11991:SF0">
    <property type="entry name" value="TRANSLATIONALLY-CONTROLLED TUMOR PROTEIN"/>
    <property type="match status" value="1"/>
</dbReference>
<dbReference type="Pfam" id="PF00838">
    <property type="entry name" value="TCTP"/>
    <property type="match status" value="1"/>
</dbReference>
<dbReference type="PRINTS" id="PR01653">
    <property type="entry name" value="TCTPROTEIN"/>
</dbReference>
<dbReference type="SUPFAM" id="SSF51316">
    <property type="entry name" value="Mss4-like"/>
    <property type="match status" value="1"/>
</dbReference>
<dbReference type="PROSITE" id="PS01003">
    <property type="entry name" value="TCTP_2"/>
    <property type="match status" value="1"/>
</dbReference>
<dbReference type="PROSITE" id="PS51797">
    <property type="entry name" value="TCTP_3"/>
    <property type="match status" value="1"/>
</dbReference>
<comment type="function">
    <text evidence="1">Venom protein that causes edema, enhances vascular permeability and is likely related to the inflammatory activity of the venom.</text>
</comment>
<comment type="subcellular location">
    <subcellularLocation>
        <location evidence="1">Secreted</location>
    </subcellularLocation>
</comment>
<comment type="tissue specificity">
    <text>Expressed by the venom gland.</text>
</comment>
<comment type="miscellaneous">
    <text evidence="1">Secretion of this protein from cells may proceed via an ER/Golgi-independent pathway, probably mediated by secreted vesicles called exosomes.</text>
</comment>
<comment type="similarity">
    <text evidence="2">Belongs to the TCTP family.</text>
</comment>
<reference key="1">
    <citation type="submission" date="2005-01" db="EMBL/GenBank/DDBJ databases">
        <title>Grammostola spatulata venom gland cDNA.</title>
        <authorList>
            <person name="Kimura T."/>
            <person name="Kubo T."/>
        </authorList>
    </citation>
    <scope>NUCLEOTIDE SEQUENCE [MRNA]</scope>
    <source>
        <tissue>Venom gland</tissue>
    </source>
</reference>
<accession>M5B4R7</accession>
<sequence length="173" mass="19618">MIIFKDMITGDEMFTDSSKYKVVDDCILEVECRHVTRRMGDIQLEGANPSQEEADEGTDEVTESGLDLVLNQRLVETGFSKSDYKNYLKTYTKALQDKWKEVGMSDSQMAEAKTKFTEAVKKVLPKVGDLQFFMGESSNPDGLVALLEYRENSDGTETPVMMFFKHGLEEEKV</sequence>
<feature type="chain" id="PRO_0000429458" description="Translationally-controlled tumor protein homolog">
    <location>
        <begin position="1"/>
        <end position="173"/>
    </location>
</feature>
<feature type="domain" description="TCTP" evidence="2">
    <location>
        <begin position="1"/>
        <end position="173"/>
    </location>
</feature>
<keyword id="KW-0964">Secreted</keyword>
<proteinExistence type="evidence at transcript level"/>
<evidence type="ECO:0000250" key="1"/>
<evidence type="ECO:0000255" key="2">
    <source>
        <dbReference type="PROSITE-ProRule" id="PRU01133"/>
    </source>
</evidence>
<protein>
    <recommendedName>
        <fullName>Translationally-controlled tumor protein homolog</fullName>
        <shortName>GTx-TCTP1</shortName>
    </recommendedName>
</protein>
<organism>
    <name type="scientific">Grammostola rosea</name>
    <name type="common">Chilean rose tarantula</name>
    <name type="synonym">Grammostola spatulata</name>
    <dbReference type="NCBI Taxonomy" id="432528"/>
    <lineage>
        <taxon>Eukaryota</taxon>
        <taxon>Metazoa</taxon>
        <taxon>Ecdysozoa</taxon>
        <taxon>Arthropoda</taxon>
        <taxon>Chelicerata</taxon>
        <taxon>Arachnida</taxon>
        <taxon>Araneae</taxon>
        <taxon>Mygalomorphae</taxon>
        <taxon>Theraphosidae</taxon>
        <taxon>Grammostola</taxon>
    </lineage>
</organism>